<keyword id="KW-0002">3D-structure</keyword>
<keyword id="KW-0021">Allosteric enzyme</keyword>
<keyword id="KW-0067">ATP-binding</keyword>
<keyword id="KW-0342">GTP-binding</keyword>
<keyword id="KW-0418">Kinase</keyword>
<keyword id="KW-0460">Magnesium</keyword>
<keyword id="KW-0479">Metal-binding</keyword>
<keyword id="KW-0547">Nucleotide-binding</keyword>
<keyword id="KW-1185">Reference proteome</keyword>
<keyword id="KW-0808">Transferase</keyword>
<sequence>MDDKQWERFLVPYRQAVEELKVKLKGIRTLYEYEDDHSPIEFVTGRVKPVASILEKARRKSIPLHEIETMQDIAGLRIMCQFVDDIQIVKEMLFARKDFTVVDQRDYIAEHKESGYRSYHLVVLYPLQTVSGEKHVLVEIQIRTLAMNFWATIEHSLNYKYSGNIPEKVKLRLQRASEAASRLDEEMSEIRGEVQEAQAAFSRKKKGSEQQ</sequence>
<feature type="chain" id="PRO_0000390876" description="GTP pyrophosphokinase YjbM">
    <location>
        <begin position="1"/>
        <end position="211"/>
    </location>
</feature>
<feature type="active site" description="Proton acceptor" evidence="6">
    <location>
        <position position="139"/>
    </location>
</feature>
<feature type="binding site" evidence="3 8">
    <location>
        <begin position="21"/>
        <end position="28"/>
    </location>
    <ligand>
        <name>guanosine 3'-diphosphate 5'-triphosphate</name>
        <dbReference type="ChEBI" id="CHEBI:142410"/>
        <label>2</label>
        <note>allosteric activator; ligand shared between two neighboring subunits</note>
    </ligand>
</feature>
<feature type="binding site" evidence="3 8">
    <location>
        <begin position="41"/>
        <end position="42"/>
    </location>
    <ligand>
        <name>guanosine 3'-diphosphate 5'-triphosphate</name>
        <dbReference type="ChEBI" id="CHEBI:142410"/>
        <label>2</label>
        <note>allosteric activator; ligand shared between two neighboring subunits</note>
    </ligand>
</feature>
<feature type="binding site" evidence="6 9">
    <location>
        <begin position="46"/>
        <end position="48"/>
    </location>
    <ligand>
        <name>ATP</name>
        <dbReference type="ChEBI" id="CHEBI:30616"/>
    </ligand>
</feature>
<feature type="binding site" evidence="3 8">
    <location>
        <begin position="46"/>
        <end position="48"/>
    </location>
    <ligand>
        <name>guanosine 3'-diphosphate 5'-triphosphate</name>
        <dbReference type="ChEBI" id="CHEBI:142410"/>
        <label>1</label>
        <note>product</note>
    </ligand>
</feature>
<feature type="binding site" evidence="6 9">
    <location>
        <position position="52"/>
    </location>
    <ligand>
        <name>ATP</name>
        <dbReference type="ChEBI" id="CHEBI:30616"/>
    </ligand>
</feature>
<feature type="binding site" evidence="6 9">
    <location>
        <begin position="56"/>
        <end position="59"/>
    </location>
    <ligand>
        <name>ATP</name>
        <dbReference type="ChEBI" id="CHEBI:30616"/>
    </ligand>
</feature>
<feature type="binding site" evidence="3 8">
    <location>
        <position position="59"/>
    </location>
    <ligand>
        <name>guanosine 3'-diphosphate 5'-triphosphate</name>
        <dbReference type="ChEBI" id="CHEBI:142410"/>
        <label>1</label>
        <note>product</note>
    </ligand>
</feature>
<feature type="binding site" evidence="6 9">
    <location>
        <position position="72"/>
    </location>
    <ligand>
        <name>ATP</name>
        <dbReference type="ChEBI" id="CHEBI:30616"/>
    </ligand>
</feature>
<feature type="binding site" evidence="3">
    <location>
        <position position="72"/>
    </location>
    <ligand>
        <name>Mg(2+)</name>
        <dbReference type="ChEBI" id="CHEBI:18420"/>
    </ligand>
</feature>
<feature type="binding site" evidence="6 9">
    <location>
        <position position="77"/>
    </location>
    <ligand>
        <name>ATP</name>
        <dbReference type="ChEBI" id="CHEBI:30616"/>
    </ligand>
</feature>
<feature type="binding site" evidence="3 8">
    <location>
        <position position="105"/>
    </location>
    <ligand>
        <name>guanosine 3'-diphosphate 5'-triphosphate</name>
        <dbReference type="ChEBI" id="CHEBI:142410"/>
        <label>1</label>
        <note>product</note>
    </ligand>
</feature>
<feature type="binding site" evidence="3 8">
    <location>
        <begin position="112"/>
        <end position="114"/>
    </location>
    <ligand>
        <name>guanosine 3'-diphosphate 5'-triphosphate</name>
        <dbReference type="ChEBI" id="CHEBI:142410"/>
        <label>1</label>
        <note>product</note>
    </ligand>
</feature>
<feature type="binding site" evidence="3 8">
    <location>
        <position position="120"/>
    </location>
    <ligand>
        <name>guanosine 3'-diphosphate 5'-triphosphate</name>
        <dbReference type="ChEBI" id="CHEBI:142410"/>
        <label>1</label>
        <note>product</note>
    </ligand>
</feature>
<feature type="binding site" evidence="3 8">
    <location>
        <position position="148"/>
    </location>
    <ligand>
        <name>guanosine 3'-diphosphate 5'-triphosphate</name>
        <dbReference type="ChEBI" id="CHEBI:142410"/>
        <label>2</label>
        <note>allosteric activator; ligand shared between two neighboring subunits</note>
    </ligand>
</feature>
<feature type="binding site" evidence="3 8">
    <location>
        <begin position="151"/>
        <end position="155"/>
    </location>
    <ligand>
        <name>guanosine 3'-diphosphate 5'-triphosphate</name>
        <dbReference type="ChEBI" id="CHEBI:142410"/>
        <label>1</label>
        <note>product</note>
    </ligand>
</feature>
<feature type="mutagenesis site" description="No stimulation by (p)ppGpp, protein still forms tetramers." evidence="3">
    <original>K</original>
    <variation>A</variation>
    <location>
        <position position="25"/>
    </location>
</feature>
<feature type="mutagenesis site" description="No stimulation by (p)ppGpp, protein still forms tetramers." evidence="3">
    <original>F</original>
    <variation>A</variation>
    <location>
        <position position="42"/>
    </location>
</feature>
<feature type="mutagenesis site" description="Loss of (p)ppGpp synthesis, protein still forms tetramers." evidence="3">
    <original>R</original>
    <variation>G</variation>
    <location>
        <position position="46"/>
    </location>
</feature>
<feature type="mutagenesis site" description="Loss of (p)ppGpp synthesis, protein still forms tetramers." evidence="3">
    <original>E</original>
    <variation>V</variation>
    <location>
        <position position="139"/>
    </location>
</feature>
<feature type="mutagenesis site" description="No stimulation by (p)ppGpp, protein still forms tetramers." evidence="3">
    <original>N</original>
    <variation>G</variation>
    <location>
        <position position="148"/>
    </location>
</feature>
<feature type="helix" evidence="10">
    <location>
        <begin position="4"/>
        <end position="31"/>
    </location>
</feature>
<feature type="strand" evidence="10">
    <location>
        <begin position="42"/>
        <end position="47"/>
    </location>
</feature>
<feature type="helix" evidence="10">
    <location>
        <begin position="50"/>
        <end position="59"/>
    </location>
</feature>
<feature type="helix" evidence="10">
    <location>
        <begin position="64"/>
        <end position="69"/>
    </location>
</feature>
<feature type="strand" evidence="10">
    <location>
        <begin position="73"/>
        <end position="82"/>
    </location>
</feature>
<feature type="helix" evidence="10">
    <location>
        <begin position="83"/>
        <end position="95"/>
    </location>
</feature>
<feature type="strand" evidence="10">
    <location>
        <begin position="97"/>
        <end position="107"/>
    </location>
</feature>
<feature type="helix" evidence="11">
    <location>
        <begin position="108"/>
        <end position="113"/>
    </location>
</feature>
<feature type="strand" evidence="10">
    <location>
        <begin position="119"/>
        <end position="129"/>
    </location>
</feature>
<feature type="strand" evidence="10">
    <location>
        <begin position="132"/>
        <end position="144"/>
    </location>
</feature>
<feature type="helix" evidence="10">
    <location>
        <begin position="145"/>
        <end position="160"/>
    </location>
</feature>
<feature type="turn" evidence="10">
    <location>
        <begin position="161"/>
        <end position="163"/>
    </location>
</feature>
<feature type="helix" evidence="10">
    <location>
        <begin position="167"/>
        <end position="195"/>
    </location>
</feature>
<comment type="function">
    <text evidence="1 3">Functions as a (p)ppGpp synthase; GDP can be used instead of GTP, resulting in an increase of (p)ppGpp synthesis (PubMed:18067544). The enzyme binds ATP, then GDP or GTP and catalysis is highly cooperative (PubMed:26460002). In eubacteria ppGpp (guanosine 3'-diphosphate 5'-diphosphate) is a mediator of the stringent response that coordinates a variety of cellular activities in response to changes in nutritional abundance. Probably has a minor role in the stringent response (PubMed:18067544).</text>
</comment>
<comment type="catalytic activity">
    <reaction evidence="3">
        <text>GTP + ATP = guanosine 3'-diphosphate 5'-triphosphate + AMP</text>
        <dbReference type="Rhea" id="RHEA:22088"/>
        <dbReference type="ChEBI" id="CHEBI:30616"/>
        <dbReference type="ChEBI" id="CHEBI:37565"/>
        <dbReference type="ChEBI" id="CHEBI:142410"/>
        <dbReference type="ChEBI" id="CHEBI:456215"/>
        <dbReference type="EC" id="2.7.6.5"/>
    </reaction>
    <physiologicalReaction direction="left-to-right" evidence="6">
        <dbReference type="Rhea" id="RHEA:22089"/>
    </physiologicalReaction>
</comment>
<comment type="catalytic activity">
    <reaction evidence="3">
        <text>GDP + ATP = guanosine 3',5'-bis(diphosphate) + AMP</text>
        <dbReference type="Rhea" id="RHEA:28098"/>
        <dbReference type="ChEBI" id="CHEBI:30616"/>
        <dbReference type="ChEBI" id="CHEBI:58189"/>
        <dbReference type="ChEBI" id="CHEBI:77828"/>
        <dbReference type="ChEBI" id="CHEBI:456215"/>
    </reaction>
    <physiologicalReaction direction="left-to-right" evidence="6">
        <dbReference type="Rhea" id="RHEA:28099"/>
    </physiologicalReaction>
</comment>
<comment type="activity regulation">
    <text evidence="3">Allosterically regulated by its own products; pppGpp simulates synthesis 10-fold more than ppGpp. 2 pppGpp molecules bind in a regulatory cleft in the middle of the tetramer in an asymmetric manner. There is a specific contact of Lys-25 to the gamma-phosphate of pppGpp, explaining why pppGpp stimulates activity but ppGpp does not (PubMed:26460002).</text>
</comment>
<comment type="pathway">
    <text>Purine metabolism; ppGpp biosynthesis; ppGpp from GTP: step 1/2.</text>
</comment>
<comment type="subunit">
    <text evidence="3">Homotetramer (PubMed:26460002).</text>
</comment>
<comment type="induction">
    <text evidence="1 2">Expressed during exponential growth through the transition to the stationary phase, but not during entry of cells into stationary phase (PubMed:18067544). Protein continuously expressed with a peak at 2 hours after inoculation, decreasing until 3.5 hours as cells enter stationary phase (at protein level) (PubMed:22950019).</text>
</comment>
<comment type="disruption phenotype">
    <text evidence="1">No visible phenotype, double yjbM-ywaC and triple relA-yjbM-ywaC mutants are also viable (PubMed:18067544).</text>
</comment>
<comment type="miscellaneous">
    <text evidence="1">The synthase activity of YjbM is greater than that of YwaC (PubMed:18067544).</text>
</comment>
<comment type="similarity">
    <text evidence="5">Belongs to the RelA/SpoT family.</text>
</comment>
<reference key="1">
    <citation type="journal article" date="1997" name="Nature">
        <title>The complete genome sequence of the Gram-positive bacterium Bacillus subtilis.</title>
        <authorList>
            <person name="Kunst F."/>
            <person name="Ogasawara N."/>
            <person name="Moszer I."/>
            <person name="Albertini A.M."/>
            <person name="Alloni G."/>
            <person name="Azevedo V."/>
            <person name="Bertero M.G."/>
            <person name="Bessieres P."/>
            <person name="Bolotin A."/>
            <person name="Borchert S."/>
            <person name="Borriss R."/>
            <person name="Boursier L."/>
            <person name="Brans A."/>
            <person name="Braun M."/>
            <person name="Brignell S.C."/>
            <person name="Bron S."/>
            <person name="Brouillet S."/>
            <person name="Bruschi C.V."/>
            <person name="Caldwell B."/>
            <person name="Capuano V."/>
            <person name="Carter N.M."/>
            <person name="Choi S.-K."/>
            <person name="Codani J.-J."/>
            <person name="Connerton I.F."/>
            <person name="Cummings N.J."/>
            <person name="Daniel R.A."/>
            <person name="Denizot F."/>
            <person name="Devine K.M."/>
            <person name="Duesterhoeft A."/>
            <person name="Ehrlich S.D."/>
            <person name="Emmerson P.T."/>
            <person name="Entian K.-D."/>
            <person name="Errington J."/>
            <person name="Fabret C."/>
            <person name="Ferrari E."/>
            <person name="Foulger D."/>
            <person name="Fritz C."/>
            <person name="Fujita M."/>
            <person name="Fujita Y."/>
            <person name="Fuma S."/>
            <person name="Galizzi A."/>
            <person name="Galleron N."/>
            <person name="Ghim S.-Y."/>
            <person name="Glaser P."/>
            <person name="Goffeau A."/>
            <person name="Golightly E.J."/>
            <person name="Grandi G."/>
            <person name="Guiseppi G."/>
            <person name="Guy B.J."/>
            <person name="Haga K."/>
            <person name="Haiech J."/>
            <person name="Harwood C.R."/>
            <person name="Henaut A."/>
            <person name="Hilbert H."/>
            <person name="Holsappel S."/>
            <person name="Hosono S."/>
            <person name="Hullo M.-F."/>
            <person name="Itaya M."/>
            <person name="Jones L.-M."/>
            <person name="Joris B."/>
            <person name="Karamata D."/>
            <person name="Kasahara Y."/>
            <person name="Klaerr-Blanchard M."/>
            <person name="Klein C."/>
            <person name="Kobayashi Y."/>
            <person name="Koetter P."/>
            <person name="Koningstein G."/>
            <person name="Krogh S."/>
            <person name="Kumano M."/>
            <person name="Kurita K."/>
            <person name="Lapidus A."/>
            <person name="Lardinois S."/>
            <person name="Lauber J."/>
            <person name="Lazarevic V."/>
            <person name="Lee S.-M."/>
            <person name="Levine A."/>
            <person name="Liu H."/>
            <person name="Masuda S."/>
            <person name="Mauel C."/>
            <person name="Medigue C."/>
            <person name="Medina N."/>
            <person name="Mellado R.P."/>
            <person name="Mizuno M."/>
            <person name="Moestl D."/>
            <person name="Nakai S."/>
            <person name="Noback M."/>
            <person name="Noone D."/>
            <person name="O'Reilly M."/>
            <person name="Ogawa K."/>
            <person name="Ogiwara A."/>
            <person name="Oudega B."/>
            <person name="Park S.-H."/>
            <person name="Parro V."/>
            <person name="Pohl T.M."/>
            <person name="Portetelle D."/>
            <person name="Porwollik S."/>
            <person name="Prescott A.M."/>
            <person name="Presecan E."/>
            <person name="Pujic P."/>
            <person name="Purnelle B."/>
            <person name="Rapoport G."/>
            <person name="Rey M."/>
            <person name="Reynolds S."/>
            <person name="Rieger M."/>
            <person name="Rivolta C."/>
            <person name="Rocha E."/>
            <person name="Roche B."/>
            <person name="Rose M."/>
            <person name="Sadaie Y."/>
            <person name="Sato T."/>
            <person name="Scanlan E."/>
            <person name="Schleich S."/>
            <person name="Schroeter R."/>
            <person name="Scoffone F."/>
            <person name="Sekiguchi J."/>
            <person name="Sekowska A."/>
            <person name="Seror S.J."/>
            <person name="Serror P."/>
            <person name="Shin B.-S."/>
            <person name="Soldo B."/>
            <person name="Sorokin A."/>
            <person name="Tacconi E."/>
            <person name="Takagi T."/>
            <person name="Takahashi H."/>
            <person name="Takemaru K."/>
            <person name="Takeuchi M."/>
            <person name="Tamakoshi A."/>
            <person name="Tanaka T."/>
            <person name="Terpstra P."/>
            <person name="Tognoni A."/>
            <person name="Tosato V."/>
            <person name="Uchiyama S."/>
            <person name="Vandenbol M."/>
            <person name="Vannier F."/>
            <person name="Vassarotti A."/>
            <person name="Viari A."/>
            <person name="Wambutt R."/>
            <person name="Wedler E."/>
            <person name="Wedler H."/>
            <person name="Weitzenegger T."/>
            <person name="Winters P."/>
            <person name="Wipat A."/>
            <person name="Yamamoto H."/>
            <person name="Yamane K."/>
            <person name="Yasumoto K."/>
            <person name="Yata K."/>
            <person name="Yoshida K."/>
            <person name="Yoshikawa H.-F."/>
            <person name="Zumstein E."/>
            <person name="Yoshikawa H."/>
            <person name="Danchin A."/>
        </authorList>
    </citation>
    <scope>NUCLEOTIDE SEQUENCE [LARGE SCALE GENOMIC DNA]</scope>
    <source>
        <strain>168</strain>
    </source>
</reference>
<reference key="2">
    <citation type="journal article" date="2008" name="Mol. Microbiol.">
        <title>Identification and functional analysis of novel (p)ppGpp synthetase genes in Bacillus subtilis.</title>
        <authorList>
            <person name="Nanamiya H."/>
            <person name="Kasai K."/>
            <person name="Nozawa A."/>
            <person name="Yun C.S."/>
            <person name="Narisawa T."/>
            <person name="Murakami K."/>
            <person name="Natori Y."/>
            <person name="Kawamura F."/>
            <person name="Tozawa Y."/>
        </authorList>
    </citation>
    <scope>FUNCTION AS A (P)PPGPP SYNTHASE</scope>
    <scope>INDUCTION</scope>
    <scope>DISRUPTION PHENOTYPE</scope>
    <source>
        <strain>168</strain>
    </source>
</reference>
<reference key="3">
    <citation type="journal article" date="2012" name="MicrobiologyOpen">
        <title>Expression of a small (p)ppGpp synthetase, YwaC, in the (p)ppGpp(0) mutant of Bacillus subtilis triggers YvyD-dependent dimerization of ribosome.</title>
        <authorList>
            <person name="Tagami K."/>
            <person name="Nanamiya H."/>
            <person name="Kazo Y."/>
            <person name="Maehashi M."/>
            <person name="Suzuki S."/>
            <person name="Namba E."/>
            <person name="Hoshiya M."/>
            <person name="Hanai R."/>
            <person name="Tozawa Y."/>
            <person name="Morimoto T."/>
            <person name="Ogasawara N."/>
            <person name="Kageyama Y."/>
            <person name="Ara K."/>
            <person name="Ozaki K."/>
            <person name="Yoshida M."/>
            <person name="Kuroiwa H."/>
            <person name="Kuroiwa T."/>
            <person name="Ohashi Y."/>
            <person name="Kawamura F."/>
        </authorList>
    </citation>
    <scope>INDUCTION</scope>
    <source>
        <strain>168</strain>
    </source>
</reference>
<reference evidence="7 8 9" key="4">
    <citation type="journal article" date="2015" name="Proc. Natl. Acad. Sci. U.S.A.">
        <title>Catalytic mechanism and allosteric regulation of an oligomeric (p)ppGpp synthetase by an alarmone.</title>
        <authorList>
            <person name="Steinchen W."/>
            <person name="Schuhmacher J.S."/>
            <person name="Altegoer F."/>
            <person name="Fage C.D."/>
            <person name="Srinivasan V."/>
            <person name="Linne U."/>
            <person name="Marahiel M.A."/>
            <person name="Bange G."/>
        </authorList>
    </citation>
    <scope>X-RAY CRYSTALLOGRAPHY (2.00 ANGSTROMS) OF 2-211 APO-FORM AND IN COMPLEXES WITH ATP ANALOG OR PPPGPP</scope>
    <scope>FUNCTION</scope>
    <scope>REACTION MECHANISM</scope>
    <scope>CATALYTIC ACTIVITY</scope>
    <scope>ACTIVITY REGULATION</scope>
    <scope>ACTIVE SITE</scope>
    <scope>SUBUNIT</scope>
    <scope>ATP-BINDING</scope>
    <scope>MUTAGENESIS OF LYS-25; PHE-42; ARG-46; GLU-139 AND ASN-148</scope>
    <source>
        <strain>168 / PY79</strain>
    </source>
</reference>
<gene>
    <name type="primary">yjbM</name>
    <name type="ordered locus">BSU11600</name>
</gene>
<protein>
    <recommendedName>
        <fullName>GTP pyrophosphokinase YjbM</fullName>
        <ecNumber evidence="3">2.7.6.5</ecNumber>
    </recommendedName>
    <alternativeName>
        <fullName>(p)ppGpp synthase YjbM</fullName>
    </alternativeName>
    <alternativeName>
        <fullName evidence="4">Small alarmone synthase 1</fullName>
        <shortName evidence="4">SAS 1</shortName>
    </alternativeName>
</protein>
<name>YJBM_BACSU</name>
<evidence type="ECO:0000269" key="1">
    <source>
    </source>
</evidence>
<evidence type="ECO:0000269" key="2">
    <source>
    </source>
</evidence>
<evidence type="ECO:0000269" key="3">
    <source>
    </source>
</evidence>
<evidence type="ECO:0000303" key="4">
    <source>
    </source>
</evidence>
<evidence type="ECO:0000305" key="5"/>
<evidence type="ECO:0000305" key="6">
    <source>
    </source>
</evidence>
<evidence type="ECO:0007744" key="7">
    <source>
        <dbReference type="PDB" id="5DEC"/>
    </source>
</evidence>
<evidence type="ECO:0007744" key="8">
    <source>
        <dbReference type="PDB" id="5DED"/>
    </source>
</evidence>
<evidence type="ECO:0007744" key="9">
    <source>
        <dbReference type="PDB" id="5F2V"/>
    </source>
</evidence>
<evidence type="ECO:0007829" key="10">
    <source>
        <dbReference type="PDB" id="5DEC"/>
    </source>
</evidence>
<evidence type="ECO:0007829" key="11">
    <source>
        <dbReference type="PDB" id="5F2V"/>
    </source>
</evidence>
<organism>
    <name type="scientific">Bacillus subtilis (strain 168)</name>
    <dbReference type="NCBI Taxonomy" id="224308"/>
    <lineage>
        <taxon>Bacteria</taxon>
        <taxon>Bacillati</taxon>
        <taxon>Bacillota</taxon>
        <taxon>Bacilli</taxon>
        <taxon>Bacillales</taxon>
        <taxon>Bacillaceae</taxon>
        <taxon>Bacillus</taxon>
    </lineage>
</organism>
<accession>O31611</accession>
<proteinExistence type="evidence at protein level"/>
<dbReference type="EC" id="2.7.6.5" evidence="3"/>
<dbReference type="EMBL" id="AL009126">
    <property type="protein sequence ID" value="CAB13017.1"/>
    <property type="molecule type" value="Genomic_DNA"/>
</dbReference>
<dbReference type="PIR" id="E69844">
    <property type="entry name" value="E69844"/>
</dbReference>
<dbReference type="RefSeq" id="WP_003245294.1">
    <property type="nucleotide sequence ID" value="NZ_OZ025638.1"/>
</dbReference>
<dbReference type="PDB" id="5DEC">
    <property type="method" value="X-ray"/>
    <property type="resolution" value="2.00 A"/>
    <property type="chains" value="A/B/C/D=2-211"/>
</dbReference>
<dbReference type="PDB" id="5DED">
    <property type="method" value="X-ray"/>
    <property type="resolution" value="2.94 A"/>
    <property type="chains" value="A/B/C/D/E/F/G/H=2-211"/>
</dbReference>
<dbReference type="PDB" id="5F2V">
    <property type="method" value="X-ray"/>
    <property type="resolution" value="2.80 A"/>
    <property type="chains" value="O/P/Q/R/S/T/U/V/W/X/Y/Z=3-211"/>
</dbReference>
<dbReference type="PDBsum" id="5DEC"/>
<dbReference type="PDBsum" id="5DED"/>
<dbReference type="PDBsum" id="5F2V"/>
<dbReference type="SMR" id="O31611"/>
<dbReference type="FunCoup" id="O31611">
    <property type="interactions" value="114"/>
</dbReference>
<dbReference type="STRING" id="224308.BSU11600"/>
<dbReference type="PaxDb" id="224308-BSU11600"/>
<dbReference type="EnsemblBacteria" id="CAB13017">
    <property type="protein sequence ID" value="CAB13017"/>
    <property type="gene ID" value="BSU_11600"/>
</dbReference>
<dbReference type="GeneID" id="86874360"/>
<dbReference type="GeneID" id="939809"/>
<dbReference type="KEGG" id="bsu:BSU11600"/>
<dbReference type="PATRIC" id="fig|224308.179.peg.1249"/>
<dbReference type="eggNOG" id="COG2357">
    <property type="taxonomic scope" value="Bacteria"/>
</dbReference>
<dbReference type="InParanoid" id="O31611"/>
<dbReference type="OrthoDB" id="9789634at2"/>
<dbReference type="PhylomeDB" id="O31611"/>
<dbReference type="BioCyc" id="BSUB:BSU11600-MONOMER"/>
<dbReference type="BRENDA" id="2.7.6.5">
    <property type="organism ID" value="658"/>
</dbReference>
<dbReference type="UniPathway" id="UPA00908">
    <property type="reaction ID" value="UER00884"/>
</dbReference>
<dbReference type="EvolutionaryTrace" id="O31611"/>
<dbReference type="Proteomes" id="UP000001570">
    <property type="component" value="Chromosome"/>
</dbReference>
<dbReference type="GO" id="GO:0005524">
    <property type="term" value="F:ATP binding"/>
    <property type="evidence" value="ECO:0007669"/>
    <property type="project" value="UniProtKB-KW"/>
</dbReference>
<dbReference type="GO" id="GO:0005525">
    <property type="term" value="F:GTP binding"/>
    <property type="evidence" value="ECO:0007669"/>
    <property type="project" value="UniProtKB-KW"/>
</dbReference>
<dbReference type="GO" id="GO:0008728">
    <property type="term" value="F:GTP diphosphokinase activity"/>
    <property type="evidence" value="ECO:0007669"/>
    <property type="project" value="UniProtKB-EC"/>
</dbReference>
<dbReference type="GO" id="GO:0016301">
    <property type="term" value="F:kinase activity"/>
    <property type="evidence" value="ECO:0007669"/>
    <property type="project" value="UniProtKB-KW"/>
</dbReference>
<dbReference type="GO" id="GO:0046872">
    <property type="term" value="F:metal ion binding"/>
    <property type="evidence" value="ECO:0007669"/>
    <property type="project" value="UniProtKB-KW"/>
</dbReference>
<dbReference type="GO" id="GO:0015970">
    <property type="term" value="P:guanosine tetraphosphate biosynthetic process"/>
    <property type="evidence" value="ECO:0007669"/>
    <property type="project" value="UniProtKB-UniPathway"/>
</dbReference>
<dbReference type="CDD" id="cd05399">
    <property type="entry name" value="NT_Rel-Spo_like"/>
    <property type="match status" value="1"/>
</dbReference>
<dbReference type="FunFam" id="1.10.287.860:FF:000001">
    <property type="entry name" value="GTP pyrophosphokinase YjbM"/>
    <property type="match status" value="1"/>
</dbReference>
<dbReference type="FunFam" id="3.30.460.10:FF:000012">
    <property type="entry name" value="GTP pyrophosphokinase YjbM"/>
    <property type="match status" value="1"/>
</dbReference>
<dbReference type="Gene3D" id="3.30.460.10">
    <property type="entry name" value="Beta Polymerase, domain 2"/>
    <property type="match status" value="1"/>
</dbReference>
<dbReference type="Gene3D" id="1.10.287.860">
    <property type="entry name" value="Nucleotidyltransferase"/>
    <property type="match status" value="1"/>
</dbReference>
<dbReference type="InterPro" id="IPR052366">
    <property type="entry name" value="GTP_Pyrophosphokinase"/>
</dbReference>
<dbReference type="InterPro" id="IPR043519">
    <property type="entry name" value="NT_sf"/>
</dbReference>
<dbReference type="InterPro" id="IPR007685">
    <property type="entry name" value="RelA_SpoT"/>
</dbReference>
<dbReference type="PANTHER" id="PTHR47837">
    <property type="entry name" value="GTP PYROPHOSPHOKINASE YJBM"/>
    <property type="match status" value="1"/>
</dbReference>
<dbReference type="PANTHER" id="PTHR47837:SF1">
    <property type="entry name" value="GTP PYROPHOSPHOKINASE YJBM"/>
    <property type="match status" value="1"/>
</dbReference>
<dbReference type="Pfam" id="PF04607">
    <property type="entry name" value="RelA_SpoT"/>
    <property type="match status" value="1"/>
</dbReference>
<dbReference type="SMART" id="SM00954">
    <property type="entry name" value="RelA_SpoT"/>
    <property type="match status" value="1"/>
</dbReference>
<dbReference type="SUPFAM" id="SSF81301">
    <property type="entry name" value="Nucleotidyltransferase"/>
    <property type="match status" value="1"/>
</dbReference>